<name>PAPA3_MYCTO</name>
<evidence type="ECO:0000250" key="1">
    <source>
        <dbReference type="UniProtKB" id="P9WIK5"/>
    </source>
</evidence>
<evidence type="ECO:0000305" key="2"/>
<dbReference type="EC" id="2.3.1.278" evidence="1"/>
<dbReference type="EC" id="2.3.1.279" evidence="1"/>
<dbReference type="EMBL" id="AE000516">
    <property type="protein sequence ID" value="AAK45476.1"/>
    <property type="molecule type" value="Genomic_DNA"/>
</dbReference>
<dbReference type="PIR" id="F70876">
    <property type="entry name" value="F70876"/>
</dbReference>
<dbReference type="RefSeq" id="WP_003898759.1">
    <property type="nucleotide sequence ID" value="NZ_KK341227.1"/>
</dbReference>
<dbReference type="SMR" id="P9WIK4"/>
<dbReference type="GeneID" id="45425153"/>
<dbReference type="KEGG" id="mtc:MT1219"/>
<dbReference type="PATRIC" id="fig|83331.31.peg.1318"/>
<dbReference type="HOGENOM" id="CLU_034647_0_0_11"/>
<dbReference type="Proteomes" id="UP000001020">
    <property type="component" value="Chromosome"/>
</dbReference>
<dbReference type="GO" id="GO:0016746">
    <property type="term" value="F:acyltransferase activity"/>
    <property type="evidence" value="ECO:0007669"/>
    <property type="project" value="UniProtKB-KW"/>
</dbReference>
<dbReference type="GO" id="GO:0008610">
    <property type="term" value="P:lipid biosynthetic process"/>
    <property type="evidence" value="ECO:0007669"/>
    <property type="project" value="UniProtKB-ARBA"/>
</dbReference>
<dbReference type="FunFam" id="3.30.559.10:FF:000022">
    <property type="entry name" value="Trehalose-2-sulfate acyltransferase papA2"/>
    <property type="match status" value="1"/>
</dbReference>
<dbReference type="FunFam" id="3.30.559.30:FF:000007">
    <property type="entry name" value="Trehalose-2-sulfate acyltransferase papA2"/>
    <property type="match status" value="1"/>
</dbReference>
<dbReference type="Gene3D" id="3.30.559.10">
    <property type="entry name" value="Chloramphenicol acetyltransferase-like domain"/>
    <property type="match status" value="1"/>
</dbReference>
<dbReference type="Gene3D" id="3.30.559.30">
    <property type="entry name" value="Nonribosomal peptide synthetase, condensation domain"/>
    <property type="match status" value="1"/>
</dbReference>
<dbReference type="InterPro" id="IPR023213">
    <property type="entry name" value="CAT-like_dom_sf"/>
</dbReference>
<dbReference type="InterPro" id="IPR001242">
    <property type="entry name" value="Condensatn"/>
</dbReference>
<dbReference type="Pfam" id="PF00668">
    <property type="entry name" value="Condensation"/>
    <property type="match status" value="1"/>
</dbReference>
<dbReference type="SUPFAM" id="SSF52777">
    <property type="entry name" value="CoA-dependent acyltransferases"/>
    <property type="match status" value="2"/>
</dbReference>
<keyword id="KW-0012">Acyltransferase</keyword>
<keyword id="KW-1185">Reference proteome</keyword>
<keyword id="KW-0808">Transferase</keyword>
<sequence>MLRVGPLTIGTLDDWAPSTGSTVSWRPSAVAHTKASQAPISDVPVSYMQAQHIRGYCEQKAKGLDYSRLMVVSCQQPGQCDIRAANYVINAHLRRHDTYRSWFQYNGNGQIIRRTIQDPADIEFVPVHHGELTLPQIREIVQNTPDPLQWGCFRFGIVQGCDHFTFFASVDHVHVDAMIVGVTLMEFHLMYAALVGGHAPLELPPAGSYDDFCRRQHTFSSTLTVESPQVRAWTKFAEGTNGSFPDFPLPLGDPSKPSDADIVTVMMLDEEQTAQFESVCTAAGARFIGGVLACCGLAEHELTGTTTYYGLTPRDTRRTPADAMTQGWFTGLIPITVPIAGSAFGDAARAAQTSFDSGVKLAEVPYDRVVELSSTLTMPRPNFPVVNFLDAGAAPLSVLLTAELTGTNIGVYSDGRYSYQLSIYVIRVEQGTAVAVMFPDNPIARESVARYLATLKSVFQRVAESGQQQNVA</sequence>
<comment type="function">
    <text evidence="1">Involved in the biosynthesis of polyacyltrehalose (PAT), a pentaacylated, trehalose-based glycolipid that could have a role in anchoring the bacterial capsule. Catalyzes the sequential transfer of two palmitoyl groups onto a single glucose residue of trehalose generating the diacylated product 2,3-diacyltrehalose (trehalose dipalmitate).</text>
</comment>
<comment type="catalytic activity">
    <reaction evidence="1">
        <text>a long-chain fatty acyl-CoA + alpha,alpha-trehalose = a 2-O-(long-chain fatty acyl)-alpha,alpha-trehalose + CoA</text>
        <dbReference type="Rhea" id="RHEA:58044"/>
        <dbReference type="ChEBI" id="CHEBI:16551"/>
        <dbReference type="ChEBI" id="CHEBI:57287"/>
        <dbReference type="ChEBI" id="CHEBI:83139"/>
        <dbReference type="ChEBI" id="CHEBI:142477"/>
        <dbReference type="EC" id="2.3.1.279"/>
    </reaction>
    <physiologicalReaction direction="left-to-right" evidence="1">
        <dbReference type="Rhea" id="RHEA:58045"/>
    </physiologicalReaction>
</comment>
<comment type="catalytic activity">
    <reaction evidence="1">
        <text>a mycolipenoyl-CoA + a 2-O-(long-chain fatty acyl)-alpha,alpha-trehalose = a 2-O-(long-chain fatty acyl)-3-O-mycolipenoyl-trehalose + CoA</text>
        <dbReference type="Rhea" id="RHEA:38459"/>
        <dbReference type="ChEBI" id="CHEBI:57287"/>
        <dbReference type="ChEBI" id="CHEBI:142475"/>
        <dbReference type="ChEBI" id="CHEBI:142476"/>
        <dbReference type="ChEBI" id="CHEBI:142477"/>
        <dbReference type="EC" id="2.3.1.278"/>
    </reaction>
    <physiologicalReaction direction="left-to-right" evidence="1">
        <dbReference type="Rhea" id="RHEA:38460"/>
    </physiologicalReaction>
</comment>
<comment type="catalytic activity">
    <reaction evidence="1">
        <text>alpha,alpha-trehalose + hexadecanoyl-CoA = 2-O-hexadecanoyl-alpha,alpha-trehalose + CoA</text>
        <dbReference type="Rhea" id="RHEA:44052"/>
        <dbReference type="ChEBI" id="CHEBI:16551"/>
        <dbReference type="ChEBI" id="CHEBI:57287"/>
        <dbReference type="ChEBI" id="CHEBI:57379"/>
        <dbReference type="ChEBI" id="CHEBI:84041"/>
    </reaction>
    <physiologicalReaction direction="left-to-right" evidence="1">
        <dbReference type="Rhea" id="RHEA:44053"/>
    </physiologicalReaction>
</comment>
<comment type="catalytic activity">
    <reaction evidence="1">
        <text>2-O-hexadecanoyl-alpha,alpha-trehalose + hexadecanoyl-CoA = 2-O,3-O-dihexadecanoyl-alpha,alpha-trehalose + CoA</text>
        <dbReference type="Rhea" id="RHEA:44056"/>
        <dbReference type="ChEBI" id="CHEBI:57287"/>
        <dbReference type="ChEBI" id="CHEBI:57379"/>
        <dbReference type="ChEBI" id="CHEBI:84041"/>
        <dbReference type="ChEBI" id="CHEBI:84042"/>
    </reaction>
    <physiologicalReaction direction="left-to-right" evidence="1">
        <dbReference type="Rhea" id="RHEA:44057"/>
    </physiologicalReaction>
</comment>
<comment type="similarity">
    <text evidence="2">Belongs to the PapA acyltransferase family.</text>
</comment>
<organism>
    <name type="scientific">Mycobacterium tuberculosis (strain CDC 1551 / Oshkosh)</name>
    <dbReference type="NCBI Taxonomy" id="83331"/>
    <lineage>
        <taxon>Bacteria</taxon>
        <taxon>Bacillati</taxon>
        <taxon>Actinomycetota</taxon>
        <taxon>Actinomycetes</taxon>
        <taxon>Mycobacteriales</taxon>
        <taxon>Mycobacteriaceae</taxon>
        <taxon>Mycobacterium</taxon>
        <taxon>Mycobacterium tuberculosis complex</taxon>
    </lineage>
</organism>
<reference key="1">
    <citation type="journal article" date="2002" name="J. Bacteriol.">
        <title>Whole-genome comparison of Mycobacterium tuberculosis clinical and laboratory strains.</title>
        <authorList>
            <person name="Fleischmann R.D."/>
            <person name="Alland D."/>
            <person name="Eisen J.A."/>
            <person name="Carpenter L."/>
            <person name="White O."/>
            <person name="Peterson J.D."/>
            <person name="DeBoy R.T."/>
            <person name="Dodson R.J."/>
            <person name="Gwinn M.L."/>
            <person name="Haft D.H."/>
            <person name="Hickey E.K."/>
            <person name="Kolonay J.F."/>
            <person name="Nelson W.C."/>
            <person name="Umayam L.A."/>
            <person name="Ermolaeva M.D."/>
            <person name="Salzberg S.L."/>
            <person name="Delcher A."/>
            <person name="Utterback T.R."/>
            <person name="Weidman J.F."/>
            <person name="Khouri H.M."/>
            <person name="Gill J."/>
            <person name="Mikula A."/>
            <person name="Bishai W."/>
            <person name="Jacobs W.R. Jr."/>
            <person name="Venter J.C."/>
            <person name="Fraser C.M."/>
        </authorList>
    </citation>
    <scope>NUCLEOTIDE SEQUENCE [LARGE SCALE GENOMIC DNA]</scope>
    <source>
        <strain>CDC 1551 / Oshkosh</strain>
    </source>
</reference>
<protein>
    <recommendedName>
        <fullName evidence="1">Acyltransferase PapA3</fullName>
        <ecNumber evidence="1">2.3.1.278</ecNumber>
        <ecNumber evidence="1">2.3.1.279</ecNumber>
    </recommendedName>
    <alternativeName>
        <fullName evidence="1">Long-chain-acyl-CoA--trehalose acyltransferase</fullName>
    </alternativeName>
    <alternativeName>
        <fullName evidence="1">Mycolipenoyl-CoA--2-(long-chain-fatty acyl)-trehalose mycolipenoyltransferase</fullName>
    </alternativeName>
    <alternativeName>
        <fullName>Polyketide synthase-associated protein A3</fullName>
    </alternativeName>
</protein>
<accession>P9WIK4</accession>
<accession>F2GG06</accession>
<accession>L0T8W4</accession>
<accession>O50438</accession>
<accession>Q7D8P1</accession>
<feature type="chain" id="PRO_0000427991" description="Acyltransferase PapA3">
    <location>
        <begin position="1"/>
        <end position="472"/>
    </location>
</feature>
<gene>
    <name type="primary">papA3</name>
    <name type="ordered locus">MT1219</name>
</gene>
<proteinExistence type="inferred from homology"/>